<comment type="function">
    <text evidence="1">Excises ethenocytosine and uracil, which can arise by alkylation or deamination of cytosine, respectively, from the corresponding mispairs with guanine in ds-DNA. It is capable of hydrolyzing the carbon-nitrogen bond between the sugar-phosphate backbone of the DNA and the mispaired base. The complementary strand guanine functions in substrate recognition. Required for DNA damage lesion repair in stationary-phase cells.</text>
</comment>
<comment type="catalytic activity">
    <reaction evidence="1">
        <text>Specifically hydrolyzes mismatched double-stranded DNA and polynucleotides, releasing free uracil.</text>
        <dbReference type="EC" id="3.2.2.28"/>
    </reaction>
</comment>
<comment type="subunit">
    <text evidence="1">Binds DNA as a monomer.</text>
</comment>
<comment type="subcellular location">
    <subcellularLocation>
        <location evidence="1">Cytoplasm</location>
    </subcellularLocation>
</comment>
<comment type="similarity">
    <text evidence="1">Belongs to the uracil-DNA glycosylase (UDG) superfamily. TDG/mug family.</text>
</comment>
<sequence>MVEDILAPGLRVVFCGINPGLSSAEKGFPFAHPANRFWKVIHQAGFTDRQLKPQEAQLLLDYRCGVTKLVDRPTVQANEVTKLELHAGGRKLIEKIEDYQPQALAILGKQAYEQGFSQRGTQWGKQTHTIGATQIWVLPNPSGLSRVSLEKLVEAYRELDQSLVMRGL</sequence>
<evidence type="ECO:0000255" key="1">
    <source>
        <dbReference type="HAMAP-Rule" id="MF_01956"/>
    </source>
</evidence>
<gene>
    <name evidence="1" type="primary">mug</name>
    <name type="ordered locus">EFER_3010</name>
</gene>
<protein>
    <recommendedName>
        <fullName evidence="1">G/U mismatch-specific DNA glycosylase</fullName>
        <ecNumber evidence="1">3.2.2.28</ecNumber>
    </recommendedName>
    <alternativeName>
        <fullName evidence="1">Double-strand-specific uracil glycosylase</fullName>
    </alternativeName>
    <alternativeName>
        <fullName evidence="1">Mismatch-specific uracil DNA-glycosylase</fullName>
        <shortName evidence="1">MUG</shortName>
    </alternativeName>
</protein>
<proteinExistence type="inferred from homology"/>
<name>MUG_ESCF3</name>
<reference key="1">
    <citation type="journal article" date="2009" name="PLoS Genet.">
        <title>Organised genome dynamics in the Escherichia coli species results in highly diverse adaptive paths.</title>
        <authorList>
            <person name="Touchon M."/>
            <person name="Hoede C."/>
            <person name="Tenaillon O."/>
            <person name="Barbe V."/>
            <person name="Baeriswyl S."/>
            <person name="Bidet P."/>
            <person name="Bingen E."/>
            <person name="Bonacorsi S."/>
            <person name="Bouchier C."/>
            <person name="Bouvet O."/>
            <person name="Calteau A."/>
            <person name="Chiapello H."/>
            <person name="Clermont O."/>
            <person name="Cruveiller S."/>
            <person name="Danchin A."/>
            <person name="Diard M."/>
            <person name="Dossat C."/>
            <person name="Karoui M.E."/>
            <person name="Frapy E."/>
            <person name="Garry L."/>
            <person name="Ghigo J.M."/>
            <person name="Gilles A.M."/>
            <person name="Johnson J."/>
            <person name="Le Bouguenec C."/>
            <person name="Lescat M."/>
            <person name="Mangenot S."/>
            <person name="Martinez-Jehanne V."/>
            <person name="Matic I."/>
            <person name="Nassif X."/>
            <person name="Oztas S."/>
            <person name="Petit M.A."/>
            <person name="Pichon C."/>
            <person name="Rouy Z."/>
            <person name="Ruf C.S."/>
            <person name="Schneider D."/>
            <person name="Tourret J."/>
            <person name="Vacherie B."/>
            <person name="Vallenet D."/>
            <person name="Medigue C."/>
            <person name="Rocha E.P.C."/>
            <person name="Denamur E."/>
        </authorList>
    </citation>
    <scope>NUCLEOTIDE SEQUENCE [LARGE SCALE GENOMIC DNA]</scope>
    <source>
        <strain>ATCC 35469 / DSM 13698 / BCRC 15582 / CCUG 18766 / IAM 14443 / JCM 21226 / LMG 7866 / NBRC 102419 / NCTC 12128 / CDC 0568-73</strain>
    </source>
</reference>
<keyword id="KW-0963">Cytoplasm</keyword>
<keyword id="KW-0227">DNA damage</keyword>
<keyword id="KW-0228">DNA excision</keyword>
<keyword id="KW-0234">DNA repair</keyword>
<keyword id="KW-0238">DNA-binding</keyword>
<keyword id="KW-0378">Hydrolase</keyword>
<organism>
    <name type="scientific">Escherichia fergusonii (strain ATCC 35469 / DSM 13698 / CCUG 18766 / IAM 14443 / JCM 21226 / LMG 7866 / NBRC 102419 / NCTC 12128 / CDC 0568-73)</name>
    <dbReference type="NCBI Taxonomy" id="585054"/>
    <lineage>
        <taxon>Bacteria</taxon>
        <taxon>Pseudomonadati</taxon>
        <taxon>Pseudomonadota</taxon>
        <taxon>Gammaproteobacteria</taxon>
        <taxon>Enterobacterales</taxon>
        <taxon>Enterobacteriaceae</taxon>
        <taxon>Escherichia</taxon>
    </lineage>
</organism>
<accession>B7LQE3</accession>
<dbReference type="EC" id="3.2.2.28" evidence="1"/>
<dbReference type="EMBL" id="CU928158">
    <property type="protein sequence ID" value="CAQ90503.1"/>
    <property type="molecule type" value="Genomic_DNA"/>
</dbReference>
<dbReference type="RefSeq" id="WP_000228925.1">
    <property type="nucleotide sequence ID" value="NC_011740.1"/>
</dbReference>
<dbReference type="SMR" id="B7LQE3"/>
<dbReference type="GeneID" id="75060370"/>
<dbReference type="KEGG" id="efe:EFER_3010"/>
<dbReference type="HOGENOM" id="CLU_042829_3_1_6"/>
<dbReference type="OrthoDB" id="9799921at2"/>
<dbReference type="Proteomes" id="UP000000745">
    <property type="component" value="Chromosome"/>
</dbReference>
<dbReference type="GO" id="GO:0005737">
    <property type="term" value="C:cytoplasm"/>
    <property type="evidence" value="ECO:0007669"/>
    <property type="project" value="UniProtKB-SubCell"/>
</dbReference>
<dbReference type="GO" id="GO:0003677">
    <property type="term" value="F:DNA binding"/>
    <property type="evidence" value="ECO:0007669"/>
    <property type="project" value="UniProtKB-KW"/>
</dbReference>
<dbReference type="GO" id="GO:0008263">
    <property type="term" value="F:pyrimidine-specific mismatch base pair DNA N-glycosylase activity"/>
    <property type="evidence" value="ECO:0007669"/>
    <property type="project" value="UniProtKB-UniRule"/>
</dbReference>
<dbReference type="GO" id="GO:0004844">
    <property type="term" value="F:uracil DNA N-glycosylase activity"/>
    <property type="evidence" value="ECO:0007669"/>
    <property type="project" value="TreeGrafter"/>
</dbReference>
<dbReference type="GO" id="GO:0006285">
    <property type="term" value="P:base-excision repair, AP site formation"/>
    <property type="evidence" value="ECO:0007669"/>
    <property type="project" value="UniProtKB-UniRule"/>
</dbReference>
<dbReference type="CDD" id="cd10028">
    <property type="entry name" value="UDG-F2_TDG_MUG"/>
    <property type="match status" value="1"/>
</dbReference>
<dbReference type="Gene3D" id="3.40.470.10">
    <property type="entry name" value="Uracil-DNA glycosylase-like domain"/>
    <property type="match status" value="1"/>
</dbReference>
<dbReference type="HAMAP" id="MF_01956">
    <property type="entry name" value="MUG"/>
    <property type="match status" value="1"/>
</dbReference>
<dbReference type="InterPro" id="IPR015637">
    <property type="entry name" value="MUG/TDG"/>
</dbReference>
<dbReference type="InterPro" id="IPR023502">
    <property type="entry name" value="MUG_bact"/>
</dbReference>
<dbReference type="InterPro" id="IPR005122">
    <property type="entry name" value="Uracil-DNA_glycosylase-like"/>
</dbReference>
<dbReference type="InterPro" id="IPR036895">
    <property type="entry name" value="Uracil-DNA_glycosylase-like_sf"/>
</dbReference>
<dbReference type="NCBIfam" id="NF007570">
    <property type="entry name" value="PRK10201.1"/>
    <property type="match status" value="1"/>
</dbReference>
<dbReference type="PANTHER" id="PTHR12159">
    <property type="entry name" value="G/T AND G/U MISMATCH-SPECIFIC DNA GLYCOSYLASE"/>
    <property type="match status" value="1"/>
</dbReference>
<dbReference type="PANTHER" id="PTHR12159:SF9">
    <property type="entry name" value="G_T MISMATCH-SPECIFIC THYMINE DNA GLYCOSYLASE"/>
    <property type="match status" value="1"/>
</dbReference>
<dbReference type="Pfam" id="PF03167">
    <property type="entry name" value="UDG"/>
    <property type="match status" value="1"/>
</dbReference>
<dbReference type="SUPFAM" id="SSF52141">
    <property type="entry name" value="Uracil-DNA glycosylase-like"/>
    <property type="match status" value="1"/>
</dbReference>
<feature type="chain" id="PRO_1000188960" description="G/U mismatch-specific DNA glycosylase">
    <location>
        <begin position="1"/>
        <end position="168"/>
    </location>
</feature>